<sequence>MQRGIVWVVDDDSSIRWVLERALAGAGLTCTTFENGAEVLEALASKTPDVLLSDIRMPGMDGLALLKQIKQRHPMLPVIIMTAHSDLDAAVSAYQQGAFDYLPKPFDIDEAVALVERAISHYQEQQQPRNVQLNGPTTDIIGEAPAMQDVFRIIGRLSRSSISVLINGESGTGKELVAHALHRHSPRAKAPFIALNMAAIPKDLIESELFGHEKGAFTGANTIRQGRFEQADGGTLFLDEIGDMPLDVQTRLLRVLADGQFYRVGGYAPVKVDVRIIAATHQNLEQRVQEGKFREDLFHRLNVIRVHLPPLRERREDIPRLARHFLQVAARELGVEAKLLHPETEAALTRLAWPGNVRQLENTCRWLTVMAAGQEVLIQDLPGELFESTVAESTSQMQPDSWATLLAQWADRALRSGHQNLLSEAQPELERTLLTTALRHTQGHKQEAARLLGWGRNTLTRKLKELGME</sequence>
<comment type="function">
    <text evidence="2">Member of the two-component regulatory system NtrB/NtrC, which controls expression of the nitrogen-regulated (ntr) genes in response to nitrogen limitation. Phosphorylated NtrC binds directly to DNA and stimulates the formation of open promoter-sigma54-RNA polymerase complexes.</text>
</comment>
<comment type="subcellular location">
    <subcellularLocation>
        <location evidence="2">Cytoplasm</location>
    </subcellularLocation>
</comment>
<comment type="PTM">
    <text evidence="2">Phosphorylated and dephosphorylated by NtrB.</text>
</comment>
<organism>
    <name type="scientific">Escherichia coli O157:H7</name>
    <dbReference type="NCBI Taxonomy" id="83334"/>
    <lineage>
        <taxon>Bacteria</taxon>
        <taxon>Pseudomonadati</taxon>
        <taxon>Pseudomonadota</taxon>
        <taxon>Gammaproteobacteria</taxon>
        <taxon>Enterobacterales</taxon>
        <taxon>Enterobacteriaceae</taxon>
        <taxon>Escherichia</taxon>
    </lineage>
</organism>
<protein>
    <recommendedName>
        <fullName evidence="2">DNA-binding transcriptional regulator NtrC</fullName>
    </recommendedName>
    <alternativeName>
        <fullName evidence="2">Nitrogen regulation protein NR(I)</fullName>
    </alternativeName>
    <alternativeName>
        <fullName evidence="2">Nitrogen regulator I</fullName>
        <shortName evidence="2">NRI</shortName>
    </alternativeName>
</protein>
<proteinExistence type="inferred from homology"/>
<evidence type="ECO:0000250" key="1"/>
<evidence type="ECO:0000250" key="2">
    <source>
        <dbReference type="UniProtKB" id="P0AFB8"/>
    </source>
</evidence>
<evidence type="ECO:0000255" key="3">
    <source>
        <dbReference type="PROSITE-ProRule" id="PRU00169"/>
    </source>
</evidence>
<evidence type="ECO:0000255" key="4">
    <source>
        <dbReference type="PROSITE-ProRule" id="PRU00193"/>
    </source>
</evidence>
<dbReference type="EMBL" id="AE005174">
    <property type="protein sequence ID" value="AAG59057.1"/>
    <property type="molecule type" value="Genomic_DNA"/>
</dbReference>
<dbReference type="EMBL" id="BA000007">
    <property type="protein sequence ID" value="BAB38213.1"/>
    <property type="molecule type" value="Genomic_DNA"/>
</dbReference>
<dbReference type="PIR" id="F91227">
    <property type="entry name" value="F91227"/>
</dbReference>
<dbReference type="RefSeq" id="NP_312817.1">
    <property type="nucleotide sequence ID" value="NC_002695.1"/>
</dbReference>
<dbReference type="RefSeq" id="WP_001188777.1">
    <property type="nucleotide sequence ID" value="NZ_VOAI01000016.1"/>
</dbReference>
<dbReference type="BMRB" id="P0AFB9"/>
<dbReference type="SMR" id="P0AFB9"/>
<dbReference type="STRING" id="155864.Z5404"/>
<dbReference type="GeneID" id="75174103"/>
<dbReference type="GeneID" id="915105"/>
<dbReference type="KEGG" id="ece:Z5404"/>
<dbReference type="KEGG" id="ecs:ECs_4790"/>
<dbReference type="PATRIC" id="fig|386585.9.peg.5004"/>
<dbReference type="eggNOG" id="COG2204">
    <property type="taxonomic scope" value="Bacteria"/>
</dbReference>
<dbReference type="HOGENOM" id="CLU_000445_0_1_6"/>
<dbReference type="OMA" id="LENICHW"/>
<dbReference type="Proteomes" id="UP000000558">
    <property type="component" value="Chromosome"/>
</dbReference>
<dbReference type="Proteomes" id="UP000002519">
    <property type="component" value="Chromosome"/>
</dbReference>
<dbReference type="GO" id="GO:0005737">
    <property type="term" value="C:cytoplasm"/>
    <property type="evidence" value="ECO:0007669"/>
    <property type="project" value="UniProtKB-SubCell"/>
</dbReference>
<dbReference type="GO" id="GO:0005524">
    <property type="term" value="F:ATP binding"/>
    <property type="evidence" value="ECO:0007669"/>
    <property type="project" value="UniProtKB-KW"/>
</dbReference>
<dbReference type="GO" id="GO:0016887">
    <property type="term" value="F:ATP hydrolysis activity"/>
    <property type="evidence" value="ECO:0007669"/>
    <property type="project" value="InterPro"/>
</dbReference>
<dbReference type="GO" id="GO:0000156">
    <property type="term" value="F:phosphorelay response regulator activity"/>
    <property type="evidence" value="ECO:0007669"/>
    <property type="project" value="InterPro"/>
</dbReference>
<dbReference type="GO" id="GO:0043565">
    <property type="term" value="F:sequence-specific DNA binding"/>
    <property type="evidence" value="ECO:0007669"/>
    <property type="project" value="InterPro"/>
</dbReference>
<dbReference type="GO" id="GO:0009399">
    <property type="term" value="P:nitrogen fixation"/>
    <property type="evidence" value="ECO:0007669"/>
    <property type="project" value="UniProtKB-KW"/>
</dbReference>
<dbReference type="GO" id="GO:0006355">
    <property type="term" value="P:regulation of DNA-templated transcription"/>
    <property type="evidence" value="ECO:0007669"/>
    <property type="project" value="InterPro"/>
</dbReference>
<dbReference type="GO" id="GO:0006808">
    <property type="term" value="P:regulation of nitrogen utilization"/>
    <property type="evidence" value="ECO:0007669"/>
    <property type="project" value="InterPro"/>
</dbReference>
<dbReference type="CDD" id="cd00009">
    <property type="entry name" value="AAA"/>
    <property type="match status" value="1"/>
</dbReference>
<dbReference type="CDD" id="cd19919">
    <property type="entry name" value="REC_NtrC"/>
    <property type="match status" value="1"/>
</dbReference>
<dbReference type="FunFam" id="1.10.10.60:FF:000088">
    <property type="entry name" value="DNA-binding transcriptional regulator NtrC"/>
    <property type="match status" value="1"/>
</dbReference>
<dbReference type="FunFam" id="1.10.8.60:FF:000014">
    <property type="entry name" value="DNA-binding transcriptional regulator NtrC"/>
    <property type="match status" value="1"/>
</dbReference>
<dbReference type="FunFam" id="3.40.50.2300:FF:000018">
    <property type="entry name" value="DNA-binding transcriptional regulator NtrC"/>
    <property type="match status" value="1"/>
</dbReference>
<dbReference type="FunFam" id="3.40.50.300:FF:000006">
    <property type="entry name" value="DNA-binding transcriptional regulator NtrC"/>
    <property type="match status" value="1"/>
</dbReference>
<dbReference type="Gene3D" id="1.10.8.60">
    <property type="match status" value="1"/>
</dbReference>
<dbReference type="Gene3D" id="3.40.50.2300">
    <property type="match status" value="1"/>
</dbReference>
<dbReference type="Gene3D" id="1.10.10.60">
    <property type="entry name" value="Homeodomain-like"/>
    <property type="match status" value="1"/>
</dbReference>
<dbReference type="Gene3D" id="3.40.50.300">
    <property type="entry name" value="P-loop containing nucleotide triphosphate hydrolases"/>
    <property type="match status" value="1"/>
</dbReference>
<dbReference type="InterPro" id="IPR003593">
    <property type="entry name" value="AAA+_ATPase"/>
</dbReference>
<dbReference type="InterPro" id="IPR011006">
    <property type="entry name" value="CheY-like_superfamily"/>
</dbReference>
<dbReference type="InterPro" id="IPR009057">
    <property type="entry name" value="Homeodomain-like_sf"/>
</dbReference>
<dbReference type="InterPro" id="IPR002197">
    <property type="entry name" value="HTH_Fis"/>
</dbReference>
<dbReference type="InterPro" id="IPR027417">
    <property type="entry name" value="P-loop_NTPase"/>
</dbReference>
<dbReference type="InterPro" id="IPR001789">
    <property type="entry name" value="Sig_transdc_resp-reg_receiver"/>
</dbReference>
<dbReference type="InterPro" id="IPR002078">
    <property type="entry name" value="Sigma_54_int"/>
</dbReference>
<dbReference type="InterPro" id="IPR025662">
    <property type="entry name" value="Sigma_54_int_dom_ATP-bd_1"/>
</dbReference>
<dbReference type="InterPro" id="IPR025943">
    <property type="entry name" value="Sigma_54_int_dom_ATP-bd_2"/>
</dbReference>
<dbReference type="InterPro" id="IPR025944">
    <property type="entry name" value="Sigma_54_int_dom_CS"/>
</dbReference>
<dbReference type="InterPro" id="IPR010114">
    <property type="entry name" value="Transcript_reg_NtrC"/>
</dbReference>
<dbReference type="NCBIfam" id="TIGR01818">
    <property type="entry name" value="ntrC"/>
    <property type="match status" value="1"/>
</dbReference>
<dbReference type="NCBIfam" id="NF008176">
    <property type="entry name" value="PRK10923.1"/>
    <property type="match status" value="1"/>
</dbReference>
<dbReference type="PANTHER" id="PTHR32071:SF95">
    <property type="entry name" value="DNA-BINDING TRANSCRIPTIONAL REGULATOR NTRC"/>
    <property type="match status" value="1"/>
</dbReference>
<dbReference type="PANTHER" id="PTHR32071">
    <property type="entry name" value="TRANSCRIPTIONAL REGULATORY PROTEIN"/>
    <property type="match status" value="1"/>
</dbReference>
<dbReference type="Pfam" id="PF02954">
    <property type="entry name" value="HTH_8"/>
    <property type="match status" value="1"/>
</dbReference>
<dbReference type="Pfam" id="PF00072">
    <property type="entry name" value="Response_reg"/>
    <property type="match status" value="1"/>
</dbReference>
<dbReference type="Pfam" id="PF00158">
    <property type="entry name" value="Sigma54_activat"/>
    <property type="match status" value="1"/>
</dbReference>
<dbReference type="PRINTS" id="PR01590">
    <property type="entry name" value="HTHFIS"/>
</dbReference>
<dbReference type="SMART" id="SM00382">
    <property type="entry name" value="AAA"/>
    <property type="match status" value="1"/>
</dbReference>
<dbReference type="SMART" id="SM00448">
    <property type="entry name" value="REC"/>
    <property type="match status" value="1"/>
</dbReference>
<dbReference type="SUPFAM" id="SSF52172">
    <property type="entry name" value="CheY-like"/>
    <property type="match status" value="1"/>
</dbReference>
<dbReference type="SUPFAM" id="SSF46689">
    <property type="entry name" value="Homeodomain-like"/>
    <property type="match status" value="1"/>
</dbReference>
<dbReference type="SUPFAM" id="SSF52540">
    <property type="entry name" value="P-loop containing nucleoside triphosphate hydrolases"/>
    <property type="match status" value="1"/>
</dbReference>
<dbReference type="PROSITE" id="PS50110">
    <property type="entry name" value="RESPONSE_REGULATORY"/>
    <property type="match status" value="1"/>
</dbReference>
<dbReference type="PROSITE" id="PS00675">
    <property type="entry name" value="SIGMA54_INTERACT_1"/>
    <property type="match status" value="1"/>
</dbReference>
<dbReference type="PROSITE" id="PS00676">
    <property type="entry name" value="SIGMA54_INTERACT_2"/>
    <property type="match status" value="1"/>
</dbReference>
<dbReference type="PROSITE" id="PS00688">
    <property type="entry name" value="SIGMA54_INTERACT_3"/>
    <property type="match status" value="1"/>
</dbReference>
<dbReference type="PROSITE" id="PS50045">
    <property type="entry name" value="SIGMA54_INTERACT_4"/>
    <property type="match status" value="1"/>
</dbReference>
<name>NTRC_ECO57</name>
<feature type="chain" id="PRO_0000081166" description="DNA-binding transcriptional regulator NtrC">
    <location>
        <begin position="1"/>
        <end position="469"/>
    </location>
</feature>
<feature type="domain" description="Response regulatory" evidence="3">
    <location>
        <begin position="5"/>
        <end position="119"/>
    </location>
</feature>
<feature type="domain" description="Sigma-54 factor interaction" evidence="4">
    <location>
        <begin position="140"/>
        <end position="369"/>
    </location>
</feature>
<feature type="DNA-binding region" description="H-T-H motif" evidence="1">
    <location>
        <begin position="445"/>
        <end position="464"/>
    </location>
</feature>
<feature type="binding site" evidence="4">
    <location>
        <begin position="168"/>
        <end position="175"/>
    </location>
    <ligand>
        <name>ATP</name>
        <dbReference type="ChEBI" id="CHEBI:30616"/>
    </ligand>
</feature>
<feature type="binding site" evidence="4">
    <location>
        <begin position="231"/>
        <end position="240"/>
    </location>
    <ligand>
        <name>ATP</name>
        <dbReference type="ChEBI" id="CHEBI:30616"/>
    </ligand>
</feature>
<feature type="modified residue" description="4-aspartylphosphate" evidence="3">
    <location>
        <position position="54"/>
    </location>
</feature>
<accession>P0AFB9</accession>
<accession>P06713</accession>
<gene>
    <name type="primary">glnG</name>
    <name type="ordered locus">Z5404</name>
    <name type="ordered locus">ECs4790</name>
</gene>
<reference key="1">
    <citation type="journal article" date="2001" name="Nature">
        <title>Genome sequence of enterohaemorrhagic Escherichia coli O157:H7.</title>
        <authorList>
            <person name="Perna N.T."/>
            <person name="Plunkett G. III"/>
            <person name="Burland V."/>
            <person name="Mau B."/>
            <person name="Glasner J.D."/>
            <person name="Rose D.J."/>
            <person name="Mayhew G.F."/>
            <person name="Evans P.S."/>
            <person name="Gregor J."/>
            <person name="Kirkpatrick H.A."/>
            <person name="Posfai G."/>
            <person name="Hackett J."/>
            <person name="Klink S."/>
            <person name="Boutin A."/>
            <person name="Shao Y."/>
            <person name="Miller L."/>
            <person name="Grotbeck E.J."/>
            <person name="Davis N.W."/>
            <person name="Lim A."/>
            <person name="Dimalanta E.T."/>
            <person name="Potamousis K."/>
            <person name="Apodaca J."/>
            <person name="Anantharaman T.S."/>
            <person name="Lin J."/>
            <person name="Yen G."/>
            <person name="Schwartz D.C."/>
            <person name="Welch R.A."/>
            <person name="Blattner F.R."/>
        </authorList>
    </citation>
    <scope>NUCLEOTIDE SEQUENCE [LARGE SCALE GENOMIC DNA]</scope>
    <source>
        <strain>O157:H7 / EDL933 / ATCC 700927 / EHEC</strain>
    </source>
</reference>
<reference key="2">
    <citation type="journal article" date="2001" name="DNA Res.">
        <title>Complete genome sequence of enterohemorrhagic Escherichia coli O157:H7 and genomic comparison with a laboratory strain K-12.</title>
        <authorList>
            <person name="Hayashi T."/>
            <person name="Makino K."/>
            <person name="Ohnishi M."/>
            <person name="Kurokawa K."/>
            <person name="Ishii K."/>
            <person name="Yokoyama K."/>
            <person name="Han C.-G."/>
            <person name="Ohtsubo E."/>
            <person name="Nakayama K."/>
            <person name="Murata T."/>
            <person name="Tanaka M."/>
            <person name="Tobe T."/>
            <person name="Iida T."/>
            <person name="Takami H."/>
            <person name="Honda T."/>
            <person name="Sasakawa C."/>
            <person name="Ogasawara N."/>
            <person name="Yasunaga T."/>
            <person name="Kuhara S."/>
            <person name="Shiba T."/>
            <person name="Hattori M."/>
            <person name="Shinagawa H."/>
        </authorList>
    </citation>
    <scope>NUCLEOTIDE SEQUENCE [LARGE SCALE GENOMIC DNA]</scope>
    <source>
        <strain>O157:H7 / Sakai / RIMD 0509952 / EHEC</strain>
    </source>
</reference>
<keyword id="KW-0010">Activator</keyword>
<keyword id="KW-0067">ATP-binding</keyword>
<keyword id="KW-0963">Cytoplasm</keyword>
<keyword id="KW-0238">DNA-binding</keyword>
<keyword id="KW-0535">Nitrogen fixation</keyword>
<keyword id="KW-0547">Nucleotide-binding</keyword>
<keyword id="KW-0597">Phosphoprotein</keyword>
<keyword id="KW-1185">Reference proteome</keyword>
<keyword id="KW-0678">Repressor</keyword>
<keyword id="KW-0804">Transcription</keyword>
<keyword id="KW-0805">Transcription regulation</keyword>
<keyword id="KW-0902">Two-component regulatory system</keyword>